<gene>
    <name evidence="1" type="primary">rplK</name>
    <name type="ordered locus">SSPA3702</name>
</gene>
<protein>
    <recommendedName>
        <fullName evidence="1">Large ribosomal subunit protein uL11</fullName>
    </recommendedName>
    <alternativeName>
        <fullName evidence="2">50S ribosomal protein L11</fullName>
    </alternativeName>
</protein>
<accession>B5BJP9</accession>
<keyword id="KW-0488">Methylation</keyword>
<keyword id="KW-0687">Ribonucleoprotein</keyword>
<keyword id="KW-0689">Ribosomal protein</keyword>
<keyword id="KW-0694">RNA-binding</keyword>
<keyword id="KW-0699">rRNA-binding</keyword>
<sequence>MAKKVQAYVKLQVAAGMANPSPPVGPALGQQGVNIMEFCKAFNAKTDSIEKGLPIPVVITVYADRSFTFVTKTPPAAVLLKKAAGIKSGSGKPNKDKVGKISRAQLQEIAQTKAADMTGADIEAMTRSIEGTARSMGLVVED</sequence>
<reference key="1">
    <citation type="journal article" date="2009" name="BMC Genomics">
        <title>Pseudogene accumulation in the evolutionary histories of Salmonella enterica serovars Paratyphi A and Typhi.</title>
        <authorList>
            <person name="Holt K.E."/>
            <person name="Thomson N.R."/>
            <person name="Wain J."/>
            <person name="Langridge G.C."/>
            <person name="Hasan R."/>
            <person name="Bhutta Z.A."/>
            <person name="Quail M.A."/>
            <person name="Norbertczak H."/>
            <person name="Walker D."/>
            <person name="Simmonds M."/>
            <person name="White B."/>
            <person name="Bason N."/>
            <person name="Mungall K."/>
            <person name="Dougan G."/>
            <person name="Parkhill J."/>
        </authorList>
    </citation>
    <scope>NUCLEOTIDE SEQUENCE [LARGE SCALE GENOMIC DNA]</scope>
    <source>
        <strain>AKU_12601</strain>
    </source>
</reference>
<feature type="chain" id="PRO_1000195710" description="Large ribosomal subunit protein uL11">
    <location>
        <begin position="1"/>
        <end position="142"/>
    </location>
</feature>
<name>RL11_SALPK</name>
<comment type="function">
    <text evidence="1">Forms part of the ribosomal stalk which helps the ribosome interact with GTP-bound translation factors.</text>
</comment>
<comment type="subunit">
    <text evidence="1">Part of the ribosomal stalk of the 50S ribosomal subunit. Interacts with L10 and the large rRNA to form the base of the stalk. L10 forms an elongated spine to which L12 dimers bind in a sequential fashion forming a multimeric L10(L12)X complex.</text>
</comment>
<comment type="PTM">
    <text evidence="1">One or more lysine residues are methylated.</text>
</comment>
<comment type="similarity">
    <text evidence="1">Belongs to the universal ribosomal protein uL11 family.</text>
</comment>
<organism>
    <name type="scientific">Salmonella paratyphi A (strain AKU_12601)</name>
    <dbReference type="NCBI Taxonomy" id="554290"/>
    <lineage>
        <taxon>Bacteria</taxon>
        <taxon>Pseudomonadati</taxon>
        <taxon>Pseudomonadota</taxon>
        <taxon>Gammaproteobacteria</taxon>
        <taxon>Enterobacterales</taxon>
        <taxon>Enterobacteriaceae</taxon>
        <taxon>Salmonella</taxon>
    </lineage>
</organism>
<proteinExistence type="inferred from homology"/>
<dbReference type="EMBL" id="FM200053">
    <property type="protein sequence ID" value="CAR61985.1"/>
    <property type="molecule type" value="Genomic_DNA"/>
</dbReference>
<dbReference type="RefSeq" id="WP_001085926.1">
    <property type="nucleotide sequence ID" value="NC_011147.1"/>
</dbReference>
<dbReference type="SMR" id="B5BJP9"/>
<dbReference type="GeneID" id="93777911"/>
<dbReference type="KEGG" id="sek:SSPA3702"/>
<dbReference type="HOGENOM" id="CLU_074237_2_0_6"/>
<dbReference type="Proteomes" id="UP000001869">
    <property type="component" value="Chromosome"/>
</dbReference>
<dbReference type="GO" id="GO:0022625">
    <property type="term" value="C:cytosolic large ribosomal subunit"/>
    <property type="evidence" value="ECO:0007669"/>
    <property type="project" value="TreeGrafter"/>
</dbReference>
<dbReference type="GO" id="GO:0070180">
    <property type="term" value="F:large ribosomal subunit rRNA binding"/>
    <property type="evidence" value="ECO:0007669"/>
    <property type="project" value="UniProtKB-UniRule"/>
</dbReference>
<dbReference type="GO" id="GO:0003735">
    <property type="term" value="F:structural constituent of ribosome"/>
    <property type="evidence" value="ECO:0007669"/>
    <property type="project" value="InterPro"/>
</dbReference>
<dbReference type="GO" id="GO:0006412">
    <property type="term" value="P:translation"/>
    <property type="evidence" value="ECO:0007669"/>
    <property type="project" value="UniProtKB-UniRule"/>
</dbReference>
<dbReference type="CDD" id="cd00349">
    <property type="entry name" value="Ribosomal_L11"/>
    <property type="match status" value="1"/>
</dbReference>
<dbReference type="FunFam" id="1.10.10.250:FF:000001">
    <property type="entry name" value="50S ribosomal protein L11"/>
    <property type="match status" value="1"/>
</dbReference>
<dbReference type="FunFam" id="3.30.1550.10:FF:000001">
    <property type="entry name" value="50S ribosomal protein L11"/>
    <property type="match status" value="1"/>
</dbReference>
<dbReference type="Gene3D" id="1.10.10.250">
    <property type="entry name" value="Ribosomal protein L11, C-terminal domain"/>
    <property type="match status" value="1"/>
</dbReference>
<dbReference type="Gene3D" id="3.30.1550.10">
    <property type="entry name" value="Ribosomal protein L11/L12, N-terminal domain"/>
    <property type="match status" value="1"/>
</dbReference>
<dbReference type="HAMAP" id="MF_00736">
    <property type="entry name" value="Ribosomal_uL11"/>
    <property type="match status" value="1"/>
</dbReference>
<dbReference type="InterPro" id="IPR000911">
    <property type="entry name" value="Ribosomal_uL11"/>
</dbReference>
<dbReference type="InterPro" id="IPR006519">
    <property type="entry name" value="Ribosomal_uL11_bac-typ"/>
</dbReference>
<dbReference type="InterPro" id="IPR020783">
    <property type="entry name" value="Ribosomal_uL11_C"/>
</dbReference>
<dbReference type="InterPro" id="IPR036769">
    <property type="entry name" value="Ribosomal_uL11_C_sf"/>
</dbReference>
<dbReference type="InterPro" id="IPR020785">
    <property type="entry name" value="Ribosomal_uL11_CS"/>
</dbReference>
<dbReference type="InterPro" id="IPR020784">
    <property type="entry name" value="Ribosomal_uL11_N"/>
</dbReference>
<dbReference type="InterPro" id="IPR036796">
    <property type="entry name" value="Ribosomal_uL11_N_sf"/>
</dbReference>
<dbReference type="NCBIfam" id="TIGR01632">
    <property type="entry name" value="L11_bact"/>
    <property type="match status" value="1"/>
</dbReference>
<dbReference type="PANTHER" id="PTHR11661">
    <property type="entry name" value="60S RIBOSOMAL PROTEIN L12"/>
    <property type="match status" value="1"/>
</dbReference>
<dbReference type="PANTHER" id="PTHR11661:SF1">
    <property type="entry name" value="LARGE RIBOSOMAL SUBUNIT PROTEIN UL11M"/>
    <property type="match status" value="1"/>
</dbReference>
<dbReference type="Pfam" id="PF00298">
    <property type="entry name" value="Ribosomal_L11"/>
    <property type="match status" value="1"/>
</dbReference>
<dbReference type="Pfam" id="PF03946">
    <property type="entry name" value="Ribosomal_L11_N"/>
    <property type="match status" value="1"/>
</dbReference>
<dbReference type="SMART" id="SM00649">
    <property type="entry name" value="RL11"/>
    <property type="match status" value="1"/>
</dbReference>
<dbReference type="SUPFAM" id="SSF54747">
    <property type="entry name" value="Ribosomal L11/L12e N-terminal domain"/>
    <property type="match status" value="1"/>
</dbReference>
<dbReference type="SUPFAM" id="SSF46906">
    <property type="entry name" value="Ribosomal protein L11, C-terminal domain"/>
    <property type="match status" value="1"/>
</dbReference>
<dbReference type="PROSITE" id="PS00359">
    <property type="entry name" value="RIBOSOMAL_L11"/>
    <property type="match status" value="1"/>
</dbReference>
<evidence type="ECO:0000255" key="1">
    <source>
        <dbReference type="HAMAP-Rule" id="MF_00736"/>
    </source>
</evidence>
<evidence type="ECO:0000305" key="2"/>